<sequence>MAKIQLVAQANLPTEYGIFKMVGFEFPDTKKEHVALVMGDISNADEPVLARIHSECLTGDALHSLKCDCGFQLATALKQIQEEGRGVLIYHREEGRGIGLINKIRAYSLQDKGMDTIEANLALGFKADERNFEVCADMFELLGVKKVRLMTNNPEKVETMKKAGINVVERVPLNVGENRYNTKYLDTKAKKMGHYIVHNNDEQHLMTCPHCQEEII</sequence>
<accession>A5UG14</accession>
<keyword id="KW-0342">GTP-binding</keyword>
<keyword id="KW-0378">Hydrolase</keyword>
<keyword id="KW-0479">Metal-binding</keyword>
<keyword id="KW-0547">Nucleotide-binding</keyword>
<keyword id="KW-0686">Riboflavin biosynthesis</keyword>
<keyword id="KW-0862">Zinc</keyword>
<evidence type="ECO:0000255" key="1">
    <source>
        <dbReference type="HAMAP-Rule" id="MF_00179"/>
    </source>
</evidence>
<protein>
    <recommendedName>
        <fullName evidence="1">GTP cyclohydrolase-2</fullName>
        <ecNumber evidence="1">3.5.4.25</ecNumber>
    </recommendedName>
    <alternativeName>
        <fullName evidence="1">GTP cyclohydrolase II</fullName>
    </alternativeName>
</protein>
<feature type="chain" id="PRO_1000040564" description="GTP cyclohydrolase-2">
    <location>
        <begin position="1"/>
        <end position="216"/>
    </location>
</feature>
<feature type="active site" description="Proton acceptor" evidence="1">
    <location>
        <position position="128"/>
    </location>
</feature>
<feature type="active site" description="Nucleophile" evidence="1">
    <location>
        <position position="130"/>
    </location>
</feature>
<feature type="binding site" evidence="1">
    <location>
        <begin position="51"/>
        <end position="55"/>
    </location>
    <ligand>
        <name>GTP</name>
        <dbReference type="ChEBI" id="CHEBI:37565"/>
    </ligand>
</feature>
<feature type="binding site" evidence="1">
    <location>
        <position position="56"/>
    </location>
    <ligand>
        <name>Zn(2+)</name>
        <dbReference type="ChEBI" id="CHEBI:29105"/>
        <note>catalytic</note>
    </ligand>
</feature>
<feature type="binding site" evidence="1">
    <location>
        <position position="67"/>
    </location>
    <ligand>
        <name>Zn(2+)</name>
        <dbReference type="ChEBI" id="CHEBI:29105"/>
        <note>catalytic</note>
    </ligand>
</feature>
<feature type="binding site" evidence="1">
    <location>
        <position position="69"/>
    </location>
    <ligand>
        <name>Zn(2+)</name>
        <dbReference type="ChEBI" id="CHEBI:29105"/>
        <note>catalytic</note>
    </ligand>
</feature>
<feature type="binding site" evidence="1">
    <location>
        <position position="72"/>
    </location>
    <ligand>
        <name>GTP</name>
        <dbReference type="ChEBI" id="CHEBI:37565"/>
    </ligand>
</feature>
<feature type="binding site" evidence="1">
    <location>
        <begin position="94"/>
        <end position="96"/>
    </location>
    <ligand>
        <name>GTP</name>
        <dbReference type="ChEBI" id="CHEBI:37565"/>
    </ligand>
</feature>
<feature type="binding site" evidence="1">
    <location>
        <position position="116"/>
    </location>
    <ligand>
        <name>GTP</name>
        <dbReference type="ChEBI" id="CHEBI:37565"/>
    </ligand>
</feature>
<feature type="binding site" evidence="1">
    <location>
        <position position="151"/>
    </location>
    <ligand>
        <name>GTP</name>
        <dbReference type="ChEBI" id="CHEBI:37565"/>
    </ligand>
</feature>
<feature type="binding site" evidence="1">
    <location>
        <position position="156"/>
    </location>
    <ligand>
        <name>GTP</name>
        <dbReference type="ChEBI" id="CHEBI:37565"/>
    </ligand>
</feature>
<dbReference type="EC" id="3.5.4.25" evidence="1"/>
<dbReference type="EMBL" id="CP000672">
    <property type="protein sequence ID" value="ABQ99719.1"/>
    <property type="molecule type" value="Genomic_DNA"/>
</dbReference>
<dbReference type="SMR" id="A5UG14"/>
<dbReference type="KEGG" id="hiq:CGSHiGG_03675"/>
<dbReference type="HOGENOM" id="CLU_020273_2_1_6"/>
<dbReference type="UniPathway" id="UPA00275">
    <property type="reaction ID" value="UER00400"/>
</dbReference>
<dbReference type="Proteomes" id="UP000001990">
    <property type="component" value="Chromosome"/>
</dbReference>
<dbReference type="GO" id="GO:0005829">
    <property type="term" value="C:cytosol"/>
    <property type="evidence" value="ECO:0007669"/>
    <property type="project" value="TreeGrafter"/>
</dbReference>
<dbReference type="GO" id="GO:0005525">
    <property type="term" value="F:GTP binding"/>
    <property type="evidence" value="ECO:0007669"/>
    <property type="project" value="UniProtKB-KW"/>
</dbReference>
<dbReference type="GO" id="GO:0003935">
    <property type="term" value="F:GTP cyclohydrolase II activity"/>
    <property type="evidence" value="ECO:0007669"/>
    <property type="project" value="UniProtKB-UniRule"/>
</dbReference>
<dbReference type="GO" id="GO:0008270">
    <property type="term" value="F:zinc ion binding"/>
    <property type="evidence" value="ECO:0007669"/>
    <property type="project" value="UniProtKB-UniRule"/>
</dbReference>
<dbReference type="GO" id="GO:0009231">
    <property type="term" value="P:riboflavin biosynthetic process"/>
    <property type="evidence" value="ECO:0007669"/>
    <property type="project" value="UniProtKB-UniRule"/>
</dbReference>
<dbReference type="CDD" id="cd00641">
    <property type="entry name" value="GTP_cyclohydro2"/>
    <property type="match status" value="1"/>
</dbReference>
<dbReference type="FunFam" id="3.40.50.10990:FF:000002">
    <property type="entry name" value="GTP cyclohydrolase-2"/>
    <property type="match status" value="1"/>
</dbReference>
<dbReference type="Gene3D" id="3.40.50.10990">
    <property type="entry name" value="GTP cyclohydrolase II"/>
    <property type="match status" value="1"/>
</dbReference>
<dbReference type="HAMAP" id="MF_00179">
    <property type="entry name" value="RibA"/>
    <property type="match status" value="1"/>
</dbReference>
<dbReference type="InterPro" id="IPR032677">
    <property type="entry name" value="GTP_cyclohydro_II"/>
</dbReference>
<dbReference type="InterPro" id="IPR000926">
    <property type="entry name" value="RibA"/>
</dbReference>
<dbReference type="InterPro" id="IPR036144">
    <property type="entry name" value="RibA-like_sf"/>
</dbReference>
<dbReference type="NCBIfam" id="NF001591">
    <property type="entry name" value="PRK00393.1"/>
    <property type="match status" value="1"/>
</dbReference>
<dbReference type="NCBIfam" id="TIGR00505">
    <property type="entry name" value="ribA"/>
    <property type="match status" value="1"/>
</dbReference>
<dbReference type="PANTHER" id="PTHR21327:SF18">
    <property type="entry name" value="3,4-DIHYDROXY-2-BUTANONE 4-PHOSPHATE SYNTHASE"/>
    <property type="match status" value="1"/>
</dbReference>
<dbReference type="PANTHER" id="PTHR21327">
    <property type="entry name" value="GTP CYCLOHYDROLASE II-RELATED"/>
    <property type="match status" value="1"/>
</dbReference>
<dbReference type="Pfam" id="PF00925">
    <property type="entry name" value="GTP_cyclohydro2"/>
    <property type="match status" value="1"/>
</dbReference>
<dbReference type="SUPFAM" id="SSF142695">
    <property type="entry name" value="RibA-like"/>
    <property type="match status" value="1"/>
</dbReference>
<comment type="function">
    <text evidence="1">Catalyzes the conversion of GTP to 2,5-diamino-6-ribosylamino-4(3H)-pyrimidinone 5'-phosphate (DARP), formate and pyrophosphate.</text>
</comment>
<comment type="catalytic activity">
    <reaction evidence="1">
        <text>GTP + 4 H2O = 2,5-diamino-6-hydroxy-4-(5-phosphoribosylamino)-pyrimidine + formate + 2 phosphate + 3 H(+)</text>
        <dbReference type="Rhea" id="RHEA:23704"/>
        <dbReference type="ChEBI" id="CHEBI:15377"/>
        <dbReference type="ChEBI" id="CHEBI:15378"/>
        <dbReference type="ChEBI" id="CHEBI:15740"/>
        <dbReference type="ChEBI" id="CHEBI:37565"/>
        <dbReference type="ChEBI" id="CHEBI:43474"/>
        <dbReference type="ChEBI" id="CHEBI:58614"/>
        <dbReference type="EC" id="3.5.4.25"/>
    </reaction>
</comment>
<comment type="cofactor">
    <cofactor evidence="1">
        <name>Zn(2+)</name>
        <dbReference type="ChEBI" id="CHEBI:29105"/>
    </cofactor>
    <text evidence="1">Binds 1 zinc ion per subunit.</text>
</comment>
<comment type="pathway">
    <text evidence="1">Cofactor biosynthesis; riboflavin biosynthesis; 5-amino-6-(D-ribitylamino)uracil from GTP: step 1/4.</text>
</comment>
<comment type="similarity">
    <text evidence="1">Belongs to the GTP cyclohydrolase II family.</text>
</comment>
<gene>
    <name evidence="1" type="primary">ribA</name>
    <name type="ordered locus">CGSHiGG_03675</name>
</gene>
<proteinExistence type="inferred from homology"/>
<organism>
    <name type="scientific">Haemophilus influenzae (strain PittGG)</name>
    <dbReference type="NCBI Taxonomy" id="374931"/>
    <lineage>
        <taxon>Bacteria</taxon>
        <taxon>Pseudomonadati</taxon>
        <taxon>Pseudomonadota</taxon>
        <taxon>Gammaproteobacteria</taxon>
        <taxon>Pasteurellales</taxon>
        <taxon>Pasteurellaceae</taxon>
        <taxon>Haemophilus</taxon>
    </lineage>
</organism>
<reference key="1">
    <citation type="journal article" date="2007" name="Genome Biol.">
        <title>Characterization and modeling of the Haemophilus influenzae core and supragenomes based on the complete genomic sequences of Rd and 12 clinical nontypeable strains.</title>
        <authorList>
            <person name="Hogg J.S."/>
            <person name="Hu F.Z."/>
            <person name="Janto B."/>
            <person name="Boissy R."/>
            <person name="Hayes J."/>
            <person name="Keefe R."/>
            <person name="Post J.C."/>
            <person name="Ehrlich G.D."/>
        </authorList>
    </citation>
    <scope>NUCLEOTIDE SEQUENCE [LARGE SCALE GENOMIC DNA]</scope>
    <source>
        <strain>PittGG</strain>
    </source>
</reference>
<name>RIBA_HAEIG</name>